<proteinExistence type="evidence at protein level"/>
<evidence type="ECO:0000305" key="1"/>
<evidence type="ECO:0007829" key="2">
    <source>
        <dbReference type="PDB" id="1NFP"/>
    </source>
</evidence>
<evidence type="ECO:0007829" key="3">
    <source>
        <dbReference type="PDB" id="4J2P"/>
    </source>
</evidence>
<gene>
    <name type="primary">luxF</name>
</gene>
<reference key="1">
    <citation type="journal article" date="1988" name="Nucleic Acids Res.">
        <title>Nucleotide sequence of part of Photobacterium leiognathi lux region.</title>
        <authorList>
            <person name="Illiarinov B.A."/>
            <person name="Protopopova M.V."/>
            <person name="Karginov V.A."/>
            <person name="Mertvetsov N.P."/>
            <person name="Gitelson J.I."/>
        </authorList>
    </citation>
    <scope>NUCLEOTIDE SEQUENCE [GENOMIC DNA]</scope>
    <source>
        <strain>554</strain>
    </source>
</reference>
<reference key="2">
    <citation type="journal article" date="1990" name="Gene">
        <title>Isolation of bioluminescent functions from Photobacterium leiognathi: analysis of luxA, luxB, luxG and neighboring genes.</title>
        <authorList>
            <person name="Illarionov B.A."/>
            <person name="Blinov V.M."/>
            <person name="Donchenko A.P."/>
            <person name="Protopopova M.V."/>
            <person name="Karginov V.A."/>
            <person name="Mertvetsov N.P."/>
            <person name="Gitelson J.I."/>
        </authorList>
    </citation>
    <scope>NUCLEOTIDE SEQUENCE [GENOMIC DNA]</scope>
    <source>
        <strain>554</strain>
    </source>
</reference>
<reference key="3">
    <citation type="journal article" date="1993" name="EMBO J.">
        <title>Crystal structure of a flavoprotein related to the subunits of bacterial luciferase.</title>
        <authorList>
            <person name="Moore S.A."/>
            <person name="James M.N.G."/>
            <person name="O'Kane D.J."/>
            <person name="Lee J."/>
        </authorList>
    </citation>
    <scope>X-RAY CRYSTALLOGRAPHY (2.3 ANGSTROMS)</scope>
</reference>
<reference key="4">
    <citation type="journal article" date="1995" name="J. Mol. Biol.">
        <title>Structural refinement of the non-fluorescent flavoprotein from Photobacterium leiognathi at 1.60-A resolution.</title>
        <authorList>
            <person name="Moore S.A."/>
            <person name="James M.N.G."/>
        </authorList>
    </citation>
    <scope>X-RAY CRYSTALLOGRAPHY (1.6 ANGSTROMS)</scope>
</reference>
<sequence>MTKWNYGVFFLNFYHVGQQEPSLTMSNALETLRIIDEDTSIYDVVAFSEHHIDKSYNDETKLAPFVSLGKQIHILATSPETVVKAAKYGMPLLFKWDDSQQKRIELLNHYQAAAAKFNVDIAGVRHRLMLFVNVNDNPTQAKAELSIYLEDYLSYTQAETSIDEIINSNAAGNFDTCLHHVAEMAQGLNNKVDFLFCFESMKDQENKKSLMINFDKRVINYRKEHNLN</sequence>
<dbReference type="EMBL" id="X08036">
    <property type="protein sequence ID" value="CAA30833.1"/>
    <property type="molecule type" value="Genomic_DNA"/>
</dbReference>
<dbReference type="PIR" id="JQ0415">
    <property type="entry name" value="JQ0415"/>
</dbReference>
<dbReference type="PDB" id="1NFP">
    <property type="method" value="X-ray"/>
    <property type="resolution" value="1.60 A"/>
    <property type="chains" value="A=1-228"/>
</dbReference>
<dbReference type="PDB" id="4J2P">
    <property type="method" value="X-ray"/>
    <property type="resolution" value="1.85 A"/>
    <property type="chains" value="A=1-228"/>
</dbReference>
<dbReference type="PDBsum" id="1NFP"/>
<dbReference type="PDBsum" id="4J2P"/>
<dbReference type="SMR" id="P09142"/>
<dbReference type="STRING" id="553611.GCA_001557755_01579"/>
<dbReference type="DrugBank" id="DB08231">
    <property type="generic name" value="Myristic acid"/>
</dbReference>
<dbReference type="BRENDA" id="1.14.14.3">
    <property type="organism ID" value="4778"/>
</dbReference>
<dbReference type="EvolutionaryTrace" id="P09142"/>
<dbReference type="GO" id="GO:0047646">
    <property type="term" value="F:alkanal monooxygenase (FMN-linked) activity"/>
    <property type="evidence" value="ECO:0007669"/>
    <property type="project" value="InterPro"/>
</dbReference>
<dbReference type="CDD" id="cd00347">
    <property type="entry name" value="Flavin_utilizing_monoxygenases"/>
    <property type="match status" value="1"/>
</dbReference>
<dbReference type="Gene3D" id="3.20.20.30">
    <property type="entry name" value="Luciferase-like domain"/>
    <property type="match status" value="1"/>
</dbReference>
<dbReference type="InterPro" id="IPR018235">
    <property type="entry name" value="Bacterial_luciferase_CS"/>
</dbReference>
<dbReference type="InterPro" id="IPR011251">
    <property type="entry name" value="Luciferase-like_dom"/>
</dbReference>
<dbReference type="InterPro" id="IPR036661">
    <property type="entry name" value="Luciferase-like_sf"/>
</dbReference>
<dbReference type="InterPro" id="IPR002103">
    <property type="entry name" value="Luciferase_bac/NFP"/>
</dbReference>
<dbReference type="Pfam" id="PF00296">
    <property type="entry name" value="Bac_luciferase"/>
    <property type="match status" value="1"/>
</dbReference>
<dbReference type="PRINTS" id="PR00089">
    <property type="entry name" value="LUCIFERASE"/>
</dbReference>
<dbReference type="SUPFAM" id="SSF51679">
    <property type="entry name" value="Bacterial luciferase-like"/>
    <property type="match status" value="1"/>
</dbReference>
<dbReference type="PROSITE" id="PS00494">
    <property type="entry name" value="BACTERIAL_LUCIFERASE"/>
    <property type="match status" value="1"/>
</dbReference>
<comment type="cofactor">
    <cofactor>
        <name>FMN</name>
        <dbReference type="ChEBI" id="CHEBI:58210"/>
    </cofactor>
    <text>Binds 2 FMN per subunit. Each FMN has a myristate attached. This flavin-fatty acid linkage is probably the result of an enzyme-catalyzed reaction, most likely the bioluminescence reaction itself.</text>
</comment>
<comment type="subunit">
    <text>Homodimer.</text>
</comment>
<comment type="similarity">
    <text evidence="1">Belongs to the bacterial luciferase oxidoreductase family.</text>
</comment>
<comment type="caution">
    <text evidence="1">Was originally termed luxG.</text>
</comment>
<accession>P09142</accession>
<organism>
    <name type="scientific">Photobacterium leiognathi</name>
    <dbReference type="NCBI Taxonomy" id="553611"/>
    <lineage>
        <taxon>Bacteria</taxon>
        <taxon>Pseudomonadati</taxon>
        <taxon>Pseudomonadota</taxon>
        <taxon>Gammaproteobacteria</taxon>
        <taxon>Vibrionales</taxon>
        <taxon>Vibrionaceae</taxon>
        <taxon>Photobacterium</taxon>
    </lineage>
</organism>
<feature type="chain" id="PRO_0000220182" description="Non-fluorescent flavoprotein">
    <location>
        <begin position="1"/>
        <end position="228"/>
    </location>
</feature>
<feature type="strand" evidence="2">
    <location>
        <begin position="6"/>
        <end position="11"/>
    </location>
</feature>
<feature type="helix" evidence="2">
    <location>
        <begin position="21"/>
        <end position="37"/>
    </location>
</feature>
<feature type="strand" evidence="2">
    <location>
        <begin position="42"/>
        <end position="48"/>
    </location>
</feature>
<feature type="helix" evidence="3">
    <location>
        <begin position="51"/>
        <end position="54"/>
    </location>
</feature>
<feature type="strand" evidence="2">
    <location>
        <begin position="65"/>
        <end position="68"/>
    </location>
</feature>
<feature type="strand" evidence="2">
    <location>
        <begin position="71"/>
        <end position="75"/>
    </location>
</feature>
<feature type="helix" evidence="2">
    <location>
        <begin position="79"/>
        <end position="87"/>
    </location>
</feature>
<feature type="strand" evidence="2">
    <location>
        <begin position="92"/>
        <end position="94"/>
    </location>
</feature>
<feature type="helix" evidence="2">
    <location>
        <begin position="100"/>
        <end position="117"/>
    </location>
</feature>
<feature type="strand" evidence="2">
    <location>
        <begin position="126"/>
        <end position="134"/>
    </location>
</feature>
<feature type="helix" evidence="2">
    <location>
        <begin position="138"/>
        <end position="156"/>
    </location>
</feature>
<feature type="helix" evidence="3">
    <location>
        <begin position="159"/>
        <end position="161"/>
    </location>
</feature>
<feature type="helix" evidence="2">
    <location>
        <begin position="162"/>
        <end position="167"/>
    </location>
</feature>
<feature type="strand" evidence="2">
    <location>
        <begin position="169"/>
        <end position="172"/>
    </location>
</feature>
<feature type="helix" evidence="2">
    <location>
        <begin position="174"/>
        <end position="187"/>
    </location>
</feature>
<feature type="turn" evidence="2">
    <location>
        <begin position="188"/>
        <end position="190"/>
    </location>
</feature>
<feature type="strand" evidence="2">
    <location>
        <begin position="192"/>
        <end position="197"/>
    </location>
</feature>
<feature type="helix" evidence="2">
    <location>
        <begin position="204"/>
        <end position="224"/>
    </location>
</feature>
<name>LUXF_PHOLE</name>
<keyword id="KW-0002">3D-structure</keyword>
<keyword id="KW-0285">Flavoprotein</keyword>
<protein>
    <recommendedName>
        <fullName>Non-fluorescent flavoprotein</fullName>
        <shortName>NFP</shortName>
    </recommendedName>
    <alternativeName>
        <fullName>FP390</fullName>
    </alternativeName>
</protein>